<accession>Q7YRZ8</accession>
<protein>
    <recommendedName>
        <fullName>E3 ubiquitin-protein ligase Mdm2</fullName>
        <ecNumber evidence="2">2.3.2.27</ecNumber>
    </recommendedName>
    <alternativeName>
        <fullName>Double minute 2 protein</fullName>
    </alternativeName>
    <alternativeName>
        <fullName evidence="9">RING-type E3 ubiquitin transferase Mdm2</fullName>
    </alternativeName>
    <alternativeName>
        <fullName>p53-binding protein Mdm2</fullName>
    </alternativeName>
</protein>
<name>MDM2_FELCA</name>
<keyword id="KW-0002">3D-structure</keyword>
<keyword id="KW-0053">Apoptosis</keyword>
<keyword id="KW-0963">Cytoplasm</keyword>
<keyword id="KW-0479">Metal-binding</keyword>
<keyword id="KW-0539">Nucleus</keyword>
<keyword id="KW-0597">Phosphoprotein</keyword>
<keyword id="KW-1185">Reference proteome</keyword>
<keyword id="KW-0808">Transferase</keyword>
<keyword id="KW-0832">Ubl conjugation</keyword>
<keyword id="KW-0833">Ubl conjugation pathway</keyword>
<keyword id="KW-0862">Zinc</keyword>
<keyword id="KW-0863">Zinc-finger</keyword>
<sequence length="491" mass="55433">MCNTNMSVSTDGAVSTSQMPASEQETLVRPKPLLLKLLKSVGAQKDTYTMKEVIFYLGQYIMTKRLYDEKQQHIVYCSNDLLGDLFGVPSFSVKEHRKIYTMIYRNLVVVNQHEPSDSGTSVSENRCHLEGGSDQKDPVQELQEEKPSSSDLVSRPSTSSRRRTISETEEHSDELPGERQRKRHKSDSISLSFDESLALCVIREICCERSSSSESTGTPSNPDLDAGVSEHSGDWLDQDSVSDQFSVEFEVESLDSEDYSLSEEGQELSDEDDEVYRVTVYQAGESDTDSFEEDPEISLADYWKCTSCNEMNPPLPPHCNRCWALRENWLPEDKGKDKGKMPEKAKVENSTQVEEGFDVPDCKRTTVNDSRESCAEENDDKITQASQSQESEDYSQPSTSNSIIHSSQEDVKEFEREETQDKEEIVEPSFPHNAIEPCVICQGRPKNGCIVHGKTGHLMACFTCAKKLKKRNKPCPVCRQPIQMIVLTYFP</sequence>
<organism>
    <name type="scientific">Felis catus</name>
    <name type="common">Cat</name>
    <name type="synonym">Felis silvestris catus</name>
    <dbReference type="NCBI Taxonomy" id="9685"/>
    <lineage>
        <taxon>Eukaryota</taxon>
        <taxon>Metazoa</taxon>
        <taxon>Chordata</taxon>
        <taxon>Craniata</taxon>
        <taxon>Vertebrata</taxon>
        <taxon>Euteleostomi</taxon>
        <taxon>Mammalia</taxon>
        <taxon>Eutheria</taxon>
        <taxon>Laurasiatheria</taxon>
        <taxon>Carnivora</taxon>
        <taxon>Feliformia</taxon>
        <taxon>Felidae</taxon>
        <taxon>Felinae</taxon>
        <taxon>Felis</taxon>
    </lineage>
</organism>
<gene>
    <name type="primary">MDM2</name>
</gene>
<reference key="1">
    <citation type="submission" date="2003-01" db="EMBL/GenBank/DDBJ databases">
        <title>Molecular cloning of feline mdm2 cDNA.</title>
        <authorList>
            <person name="Miki R."/>
            <person name="Okuda M."/>
            <person name="Ma Z."/>
            <person name="Inokuma H."/>
            <person name="Onishi T."/>
        </authorList>
    </citation>
    <scope>NUCLEOTIDE SEQUENCE [MRNA]</scope>
</reference>
<comment type="function">
    <text evidence="2 3">E3 ubiquitin-protein ligase that mediates ubiquitination of p53/TP53, leading to its degradation by the proteasome. Inhibits p53/TP53- and p73/TP73-mediated cell cycle arrest and apoptosis by binding its transcriptional activation domain. Also acts as a ubiquitin ligase E3 toward itself and ARRB1. Permits the nuclear export of p53/TP53. Promotes proteasome-dependent ubiquitin-independent degradation of retinoblastoma RB1 protein. Inhibits DAXX-mediated apoptosis by inducing its ubiquitination and degradation. Component of the TRIM28/KAP1-MDM2-p53/TP53 complex involved in stabilizing p53/TP53. Also a component of the TRIM28/KAP1-ERBB4-MDM2 complex which links growth factor and DNA damage response pathways. Mediates ubiquitination and subsequent proteasome degradation of DYRK2 in nucleus. Ubiquitinates IGF1R and SNAI1 and promotes them to proteasomal degradation. Ubiquitinates DCX, leading to DCX degradation and reduction of the dendritic spine density of olfactory bulb granule cells. Ubiquitinates DLG4, leading to proteasomal degradation of DLG4 which is required for AMPA receptor endocytosis (By similarity). Negatively regulates NDUFS1, leading to decreased mitochondrial respiration, marked oxidative stress, and commitment to the mitochondrial pathway of apoptosis (By similarity). Binds NDUFS1 leading to its cytosolic retention rather than mitochondrial localization resulting in decreased supercomplex assembly (interactions between complex I and complex III), decreased complex I activity, ROS production, and apoptosis (By similarity).</text>
</comment>
<comment type="catalytic activity">
    <reaction evidence="2">
        <text>S-ubiquitinyl-[E2 ubiquitin-conjugating enzyme]-L-cysteine + [acceptor protein]-L-lysine = [E2 ubiquitin-conjugating enzyme]-L-cysteine + N(6)-ubiquitinyl-[acceptor protein]-L-lysine.</text>
        <dbReference type="EC" id="2.3.2.27"/>
    </reaction>
</comment>
<comment type="subunit">
    <text evidence="2 3">Interacts with p53/TP53, TP73/p73, RBL5 and RP11. Binds specifically to RNA. Can interact with RB1, E1A-associated protein EP300 and the E2F1 transcription factor. Forms a ternary complex with p53/TP53 and WWOX. Interacts with CDKN2AIP, RFWD3, USP7, PYHIN1 and RBBP6. Interacts with ARRB1 and ARRB2. Interacts with PSMA3. Found in a trimeric complex with MDM2, MDM4 and USP2. Interacts with USP2 (via N-terminus and C-terminus). Interacts with MDM4. Part of a complex with MDM2, DAXX, RASSF1 and USP7. Part of a complex with DAXX, MDM2 and USP7. Interacts directly with DAXX and USP7. Interacts (via C-terminus) with RASSF1 isoform A (via N-terminus); the interaction is independent of TP53. Interacts with APEX1; leading to its ubiquitination and degradation. Interacts with RYBP; this inhibits ubiquitination of TP53. Identified in a complex with RYBP and p53/TP53. Also a component of the TRIM28/KAP1-MDM2-p53/TP53 complex involved in regulating p53/TP53 stabilization and activity. Binds directly both p53/TP53 and TRIM28. Component of the TRIM28/KAP1-ERBB4-MDM2 complex involved in connecting growth factor responses with DNA damage. Interacts directly with both TRIM28 and ERBB4 in the complex. Interacts with DYRK2. Interacts with IGF1R. Interacts with TRIM13; the interaction ubiquitinates MDM2 leading to its proteasomal degradation. Interacts with SNAI1; this interaction promotes SNAI1 ubiquitination. Interacts with NOTCH1 (via intracellular domain). Interacts with FHIT. Interacts with RFFL and RNF34; the interaction stabilizes MDM2. Interacts with CDK5RAP3 and CDKN2A/ARF; form a ternary complex involved in regulation of p53/TP53. Interacts with MTA1. Interacts with AARB2. Interacts with MTBP. Interacts with PML. Interacts with TBRG1. Interacts (via its RanBP2-type zinc finger domain) with RPL11 in the 5S RNP complex composed of 5S RNA, RPL5 and RPL11; this interaction occurs in the nucleoplasm and negatively regulates MDM2-mediated TP53 ubiquitination and degradation (By similarity). Interacts with ADGRB1; the interaction results in inhibition of MDM2-mediated ubiquitination and degradation of DLG4/PSD95, promoting DLG4 stability and regulating synaptic plasticity. Interacts with RPL23A; this interaction may promote p53/TP53 polyubiquitination (By similarity). Interacts with NDUFS1 (By similarity). Interacts with MORN3; the interaction enhances the ubiquitination of p53/TP53 (By similarity).</text>
</comment>
<comment type="subcellular location">
    <subcellularLocation>
        <location evidence="2">Nucleus</location>
        <location evidence="2">Nucleoplasm</location>
    </subcellularLocation>
    <subcellularLocation>
        <location evidence="2">Cytoplasm</location>
    </subcellularLocation>
    <subcellularLocation>
        <location evidence="2">Nucleus</location>
        <location evidence="2">Nucleolus</location>
    </subcellularLocation>
    <subcellularLocation>
        <location evidence="3">Nucleus</location>
    </subcellularLocation>
    <text evidence="2 3">Expressed predominantly in the nucleoplasm. Interaction with ARF(P14) results in the localization of both proteins to the nucleolus. The nucleolar localization signals in both ARF(P14) and MDM2 may be necessary to allow efficient nucleolar localization of both proteins. Colocalizes with RASSF1 isoform A in the nucleus (By similarity).</text>
</comment>
<comment type="domain">
    <text evidence="1">Region I is sufficient for binding p53 and inhibiting its G1 arrest and apoptosis functions. It also binds p73 and E2F1. Region II contains most of a central acidic region required for interaction with ribosomal protein L5 and a putative C4-type zinc finger. The RING finger domain which coordinates two molecules of zinc interacts specifically with RNA whether or not zinc is present and mediates the heterooligomerization with MDM4. It is also essential for its ubiquitin ligase E3 activity toward p53 and itself (By similarity).</text>
</comment>
<comment type="PTM">
    <text evidence="1">Phosphorylation on Ser-166 by SGK1 activates ubiquitination of p53/TP53. Phosphorylated at multiple sites near the RING domain by ATM upon DNA damage; this promotes its ubiquitination and degradation, preventing p53/TP53 degradation (By similarity).</text>
</comment>
<comment type="PTM">
    <text evidence="3">Autoubiquitination leads to proteasomal degradation; resulting in p53/TP53 activation it may be regulated by SFN. Also ubiquitinated by TRIM13. ATM-phosphorylated MDM2 is ubiquitinated by the SCF(FBXO31) complex in response to genotoxic stress, promoting its degradation and p53/TP53-mediated DNA damage response. Deubiquitinated by USP2 leads to its accumulation and increases deubiquitination and degradation of p53/TP53. Deubiquitinated by USP7 leading to its stabilization.</text>
</comment>
<comment type="similarity">
    <text evidence="9">Belongs to the MDM2/MDM4 family.</text>
</comment>
<dbReference type="EC" id="2.3.2.27" evidence="2"/>
<dbReference type="EMBL" id="AB099709">
    <property type="protein sequence ID" value="BAC78209.1"/>
    <property type="molecule type" value="mRNA"/>
</dbReference>
<dbReference type="RefSeq" id="NP_001009346.1">
    <property type="nucleotide sequence ID" value="NM_001009346.1"/>
</dbReference>
<dbReference type="PDB" id="6SQS">
    <property type="method" value="X-ray"/>
    <property type="resolution" value="1.83 A"/>
    <property type="chains" value="A/D=428-491"/>
</dbReference>
<dbReference type="PDBsum" id="6SQS"/>
<dbReference type="BMRB" id="Q7YRZ8"/>
<dbReference type="SMR" id="Q7YRZ8"/>
<dbReference type="FunCoup" id="Q7YRZ8">
    <property type="interactions" value="70"/>
</dbReference>
<dbReference type="STRING" id="9685.ENSFCAP00000025067"/>
<dbReference type="PaxDb" id="9685-ENSFCAP00000025067"/>
<dbReference type="GeneID" id="493939"/>
<dbReference type="KEGG" id="fca:493939"/>
<dbReference type="CTD" id="4193"/>
<dbReference type="eggNOG" id="ENOG502QQNV">
    <property type="taxonomic scope" value="Eukaryota"/>
</dbReference>
<dbReference type="InParanoid" id="Q7YRZ8"/>
<dbReference type="OrthoDB" id="24526at2759"/>
<dbReference type="Proteomes" id="UP000011712">
    <property type="component" value="Unplaced"/>
</dbReference>
<dbReference type="GO" id="GO:0005737">
    <property type="term" value="C:cytoplasm"/>
    <property type="evidence" value="ECO:0000250"/>
    <property type="project" value="UniProtKB"/>
</dbReference>
<dbReference type="GO" id="GO:0005730">
    <property type="term" value="C:nucleolus"/>
    <property type="evidence" value="ECO:0000250"/>
    <property type="project" value="UniProtKB"/>
</dbReference>
<dbReference type="GO" id="GO:0005654">
    <property type="term" value="C:nucleoplasm"/>
    <property type="evidence" value="ECO:0000250"/>
    <property type="project" value="UniProtKB"/>
</dbReference>
<dbReference type="GO" id="GO:0005634">
    <property type="term" value="C:nucleus"/>
    <property type="evidence" value="ECO:0000250"/>
    <property type="project" value="UniProtKB"/>
</dbReference>
<dbReference type="GO" id="GO:0008097">
    <property type="term" value="F:5S rRNA binding"/>
    <property type="evidence" value="ECO:0000250"/>
    <property type="project" value="UniProtKB"/>
</dbReference>
<dbReference type="GO" id="GO:0042802">
    <property type="term" value="F:identical protein binding"/>
    <property type="evidence" value="ECO:0007669"/>
    <property type="project" value="InterPro"/>
</dbReference>
<dbReference type="GO" id="GO:0043021">
    <property type="term" value="F:ribonucleoprotein complex binding"/>
    <property type="evidence" value="ECO:0000250"/>
    <property type="project" value="UniProtKB"/>
</dbReference>
<dbReference type="GO" id="GO:0043130">
    <property type="term" value="F:ubiquitin binding"/>
    <property type="evidence" value="ECO:0000250"/>
    <property type="project" value="UniProtKB"/>
</dbReference>
<dbReference type="GO" id="GO:0061630">
    <property type="term" value="F:ubiquitin protein ligase activity"/>
    <property type="evidence" value="ECO:0000318"/>
    <property type="project" value="GO_Central"/>
</dbReference>
<dbReference type="GO" id="GO:0008270">
    <property type="term" value="F:zinc ion binding"/>
    <property type="evidence" value="ECO:0007669"/>
    <property type="project" value="UniProtKB-KW"/>
</dbReference>
<dbReference type="GO" id="GO:0006915">
    <property type="term" value="P:apoptotic process"/>
    <property type="evidence" value="ECO:0000250"/>
    <property type="project" value="UniProtKB"/>
</dbReference>
<dbReference type="GO" id="GO:0043066">
    <property type="term" value="P:negative regulation of apoptotic process"/>
    <property type="evidence" value="ECO:0000318"/>
    <property type="project" value="GO_Central"/>
</dbReference>
<dbReference type="GO" id="GO:0045892">
    <property type="term" value="P:negative regulation of DNA-templated transcription"/>
    <property type="evidence" value="ECO:0000250"/>
    <property type="project" value="UniProtKB"/>
</dbReference>
<dbReference type="GO" id="GO:0000122">
    <property type="term" value="P:negative regulation of transcription by RNA polymerase II"/>
    <property type="evidence" value="ECO:0000250"/>
    <property type="project" value="UniProtKB"/>
</dbReference>
<dbReference type="GO" id="GO:0045931">
    <property type="term" value="P:positive regulation of mitotic cell cycle"/>
    <property type="evidence" value="ECO:0000318"/>
    <property type="project" value="GO_Central"/>
</dbReference>
<dbReference type="GO" id="GO:0016567">
    <property type="term" value="P:protein ubiquitination"/>
    <property type="evidence" value="ECO:0000250"/>
    <property type="project" value="UniProtKB"/>
</dbReference>
<dbReference type="GO" id="GO:0065008">
    <property type="term" value="P:regulation of biological quality"/>
    <property type="evidence" value="ECO:0007669"/>
    <property type="project" value="UniProtKB-ARBA"/>
</dbReference>
<dbReference type="GO" id="GO:0006511">
    <property type="term" value="P:ubiquitin-dependent protein catabolic process"/>
    <property type="evidence" value="ECO:0000318"/>
    <property type="project" value="GO_Central"/>
</dbReference>
<dbReference type="CDD" id="cd17672">
    <property type="entry name" value="MDM2"/>
    <property type="match status" value="1"/>
</dbReference>
<dbReference type="CDD" id="cd16783">
    <property type="entry name" value="mRING-HC-C2H2C4_MDM2"/>
    <property type="match status" value="1"/>
</dbReference>
<dbReference type="FunFam" id="1.10.245.10:FF:000002">
    <property type="entry name" value="E3 ubiquitin-protein ligase Mdm2"/>
    <property type="match status" value="1"/>
</dbReference>
<dbReference type="FunFam" id="2.30.30.380:FF:000005">
    <property type="entry name" value="E3 ubiquitin-protein ligase Mdm2"/>
    <property type="match status" value="1"/>
</dbReference>
<dbReference type="FunFam" id="3.30.40.10:FF:000076">
    <property type="entry name" value="E3 ubiquitin-protein ligase Mdm2"/>
    <property type="match status" value="1"/>
</dbReference>
<dbReference type="Gene3D" id="1.10.245.10">
    <property type="entry name" value="SWIB/MDM2 domain"/>
    <property type="match status" value="1"/>
</dbReference>
<dbReference type="Gene3D" id="3.30.40.10">
    <property type="entry name" value="Zinc/RING finger domain, C3HC4 (zinc finger)"/>
    <property type="match status" value="1"/>
</dbReference>
<dbReference type="Gene3D" id="2.30.30.380">
    <property type="entry name" value="Zn-finger domain of Sec23/24"/>
    <property type="match status" value="1"/>
</dbReference>
<dbReference type="InterPro" id="IPR028340">
    <property type="entry name" value="Mdm2"/>
</dbReference>
<dbReference type="InterPro" id="IPR044080">
    <property type="entry name" value="MDM2_mRING-HC-C2H2C4"/>
</dbReference>
<dbReference type="InterPro" id="IPR016495">
    <property type="entry name" value="p53_neg-reg_MDM_2/4"/>
</dbReference>
<dbReference type="InterPro" id="IPR036885">
    <property type="entry name" value="SWIB_MDM2_dom_sf"/>
</dbReference>
<dbReference type="InterPro" id="IPR003121">
    <property type="entry name" value="SWIB_MDM2_domain"/>
</dbReference>
<dbReference type="InterPro" id="IPR001876">
    <property type="entry name" value="Znf_RanBP2"/>
</dbReference>
<dbReference type="InterPro" id="IPR036443">
    <property type="entry name" value="Znf_RanBP2_sf"/>
</dbReference>
<dbReference type="InterPro" id="IPR001841">
    <property type="entry name" value="Znf_RING"/>
</dbReference>
<dbReference type="InterPro" id="IPR013083">
    <property type="entry name" value="Znf_RING/FYVE/PHD"/>
</dbReference>
<dbReference type="PANTHER" id="PTHR46858:SF13">
    <property type="entry name" value="E3 UBIQUITIN-PROTEIN LIGASE MDM2"/>
    <property type="match status" value="1"/>
</dbReference>
<dbReference type="PANTHER" id="PTHR46858">
    <property type="entry name" value="OS05G0521000 PROTEIN"/>
    <property type="match status" value="1"/>
</dbReference>
<dbReference type="Pfam" id="PF02201">
    <property type="entry name" value="SWIB"/>
    <property type="match status" value="1"/>
</dbReference>
<dbReference type="Pfam" id="PF13920">
    <property type="entry name" value="zf-C3HC4_3"/>
    <property type="match status" value="1"/>
</dbReference>
<dbReference type="Pfam" id="PF00641">
    <property type="entry name" value="Zn_ribbon_RanBP"/>
    <property type="match status" value="1"/>
</dbReference>
<dbReference type="PIRSF" id="PIRSF500700">
    <property type="entry name" value="MDM2"/>
    <property type="match status" value="1"/>
</dbReference>
<dbReference type="PIRSF" id="PIRSF006748">
    <property type="entry name" value="p53_MDM_2/4"/>
    <property type="match status" value="1"/>
</dbReference>
<dbReference type="SUPFAM" id="SSF90209">
    <property type="entry name" value="Ran binding protein zinc finger-like"/>
    <property type="match status" value="1"/>
</dbReference>
<dbReference type="SUPFAM" id="SSF57850">
    <property type="entry name" value="RING/U-box"/>
    <property type="match status" value="1"/>
</dbReference>
<dbReference type="SUPFAM" id="SSF47592">
    <property type="entry name" value="SWIB/MDM2 domain"/>
    <property type="match status" value="2"/>
</dbReference>
<dbReference type="PROSITE" id="PS51925">
    <property type="entry name" value="SWIB_MDM2"/>
    <property type="match status" value="1"/>
</dbReference>
<dbReference type="PROSITE" id="PS01358">
    <property type="entry name" value="ZF_RANBP2_1"/>
    <property type="match status" value="1"/>
</dbReference>
<dbReference type="PROSITE" id="PS50199">
    <property type="entry name" value="ZF_RANBP2_2"/>
    <property type="match status" value="1"/>
</dbReference>
<dbReference type="PROSITE" id="PS50089">
    <property type="entry name" value="ZF_RING_2"/>
    <property type="match status" value="1"/>
</dbReference>
<feature type="chain" id="PRO_0000157330" description="E3 ubiquitin-protein ligase Mdm2">
    <location>
        <begin position="1"/>
        <end position="491"/>
    </location>
</feature>
<feature type="domain" description="SWIB/MDM2" evidence="7">
    <location>
        <begin position="26"/>
        <end position="109"/>
    </location>
</feature>
<feature type="zinc finger region" description="RanBP2-type" evidence="6">
    <location>
        <begin position="299"/>
        <end position="328"/>
    </location>
</feature>
<feature type="zinc finger region" description="RING-type" evidence="5">
    <location>
        <begin position="438"/>
        <end position="479"/>
    </location>
</feature>
<feature type="region of interest" description="Necessary for interaction with USP2" evidence="1">
    <location>
        <begin position="1"/>
        <end position="110"/>
    </location>
</feature>
<feature type="region of interest" description="Sufficient to promote the mitochondrial pathway of apoptosis" evidence="3">
    <location>
        <begin position="1"/>
        <end position="101"/>
    </location>
</feature>
<feature type="region of interest" description="Disordered" evidence="8">
    <location>
        <begin position="1"/>
        <end position="25"/>
    </location>
</feature>
<feature type="region of interest" description="Disordered" evidence="8">
    <location>
        <begin position="114"/>
        <end position="188"/>
    </location>
</feature>
<feature type="region of interest" description="Interaction with PYHIN1 and necessary for interaction with RFFL and RNF34" evidence="3">
    <location>
        <begin position="150"/>
        <end position="230"/>
    </location>
</feature>
<feature type="region of interest" description="Interaction with MTBP" evidence="1">
    <location>
        <begin position="170"/>
        <end position="306"/>
    </location>
</feature>
<feature type="region of interest" description="ARF-binding">
    <location>
        <begin position="210"/>
        <end position="304"/>
    </location>
</feature>
<feature type="region of interest" description="Disordered" evidence="8">
    <location>
        <begin position="211"/>
        <end position="237"/>
    </location>
</feature>
<feature type="region of interest" description="Interaction with USP7" evidence="1">
    <location>
        <begin position="223"/>
        <end position="232"/>
    </location>
</feature>
<feature type="region of interest" description="Region II">
    <location>
        <begin position="242"/>
        <end position="331"/>
    </location>
</feature>
<feature type="region of interest" description="Disordered" evidence="8">
    <location>
        <begin position="252"/>
        <end position="272"/>
    </location>
</feature>
<feature type="region of interest" description="Necessary for interaction with USP2" evidence="1">
    <location>
        <begin position="276"/>
        <end position="491"/>
    </location>
</feature>
<feature type="region of interest" description="Disordered" evidence="8">
    <location>
        <begin position="332"/>
        <end position="418"/>
    </location>
</feature>
<feature type="short sequence motif" description="Nuclear localization signal" evidence="4">
    <location>
        <begin position="179"/>
        <end position="185"/>
    </location>
</feature>
<feature type="short sequence motif" description="Nuclear export signal">
    <location>
        <begin position="190"/>
        <end position="202"/>
    </location>
</feature>
<feature type="short sequence motif" description="Nucleolar localization signal" evidence="4">
    <location>
        <begin position="466"/>
        <end position="473"/>
    </location>
</feature>
<feature type="compositionally biased region" description="Basic and acidic residues" evidence="8">
    <location>
        <begin position="125"/>
        <end position="148"/>
    </location>
</feature>
<feature type="compositionally biased region" description="Basic and acidic residues" evidence="8">
    <location>
        <begin position="164"/>
        <end position="179"/>
    </location>
</feature>
<feature type="compositionally biased region" description="Basic and acidic residues" evidence="8">
    <location>
        <begin position="332"/>
        <end position="347"/>
    </location>
</feature>
<feature type="compositionally biased region" description="Basic and acidic residues" evidence="8">
    <location>
        <begin position="360"/>
        <end position="374"/>
    </location>
</feature>
<feature type="compositionally biased region" description="Polar residues" evidence="8">
    <location>
        <begin position="383"/>
        <end position="406"/>
    </location>
</feature>
<feature type="compositionally biased region" description="Basic and acidic residues" evidence="8">
    <location>
        <begin position="407"/>
        <end position="418"/>
    </location>
</feature>
<feature type="binding site" evidence="3">
    <location>
        <position position="305"/>
    </location>
    <ligand>
        <name>Zn(2+)</name>
        <dbReference type="ChEBI" id="CHEBI:29105"/>
    </ligand>
</feature>
<feature type="binding site" evidence="3">
    <location>
        <position position="308"/>
    </location>
    <ligand>
        <name>Zn(2+)</name>
        <dbReference type="ChEBI" id="CHEBI:29105"/>
    </ligand>
</feature>
<feature type="binding site" evidence="3">
    <location>
        <position position="319"/>
    </location>
    <ligand>
        <name>Zn(2+)</name>
        <dbReference type="ChEBI" id="CHEBI:29105"/>
    </ligand>
</feature>
<feature type="binding site" evidence="3">
    <location>
        <position position="322"/>
    </location>
    <ligand>
        <name>Zn(2+)</name>
        <dbReference type="ChEBI" id="CHEBI:29105"/>
    </ligand>
</feature>
<feature type="modified residue" description="Phosphoserine; by SGK1" evidence="3">
    <location>
        <position position="166"/>
    </location>
</feature>
<feature type="modified residue" description="Phosphoserine" evidence="2">
    <location>
        <position position="190"/>
    </location>
</feature>
<feature type="modified residue" description="Phosphoserine" evidence="3">
    <location>
        <position position="240"/>
    </location>
</feature>
<feature type="modified residue" description="Phosphoserine" evidence="3">
    <location>
        <position position="242"/>
    </location>
</feature>
<feature type="modified residue" description="Phosphoserine" evidence="3">
    <location>
        <position position="246"/>
    </location>
</feature>
<feature type="modified residue" description="Phosphoserine" evidence="3">
    <location>
        <position position="260"/>
    </location>
</feature>
<feature type="modified residue" description="Phosphoserine" evidence="3">
    <location>
        <position position="262"/>
    </location>
</feature>
<feature type="modified residue" description="Phosphoserine; by ATM" evidence="3">
    <location>
        <position position="386"/>
    </location>
</feature>
<feature type="modified residue" description="Phosphoserine; by ATM" evidence="3">
    <location>
        <position position="395"/>
    </location>
</feature>
<feature type="modified residue" description="Phosphoserine; by ATM" evidence="3">
    <location>
        <position position="407"/>
    </location>
</feature>
<feature type="modified residue" description="Phosphothreonine; by ATM" evidence="3">
    <location>
        <position position="419"/>
    </location>
</feature>
<feature type="modified residue" description="Phosphoserine; by ATM" evidence="3">
    <location>
        <position position="429"/>
    </location>
</feature>
<feature type="helix" evidence="10">
    <location>
        <begin position="432"/>
        <end position="435"/>
    </location>
</feature>
<feature type="turn" evidence="10">
    <location>
        <begin position="439"/>
        <end position="441"/>
    </location>
</feature>
<feature type="strand" evidence="10">
    <location>
        <begin position="442"/>
        <end position="444"/>
    </location>
</feature>
<feature type="strand" evidence="10">
    <location>
        <begin position="448"/>
        <end position="452"/>
    </location>
</feature>
<feature type="strand" evidence="10">
    <location>
        <begin position="455"/>
        <end position="457"/>
    </location>
</feature>
<feature type="helix" evidence="10">
    <location>
        <begin position="462"/>
        <end position="470"/>
    </location>
</feature>
<feature type="turn" evidence="10">
    <location>
        <begin position="476"/>
        <end position="478"/>
    </location>
</feature>
<feature type="strand" evidence="10">
    <location>
        <begin position="484"/>
        <end position="489"/>
    </location>
</feature>
<proteinExistence type="evidence at protein level"/>
<evidence type="ECO:0000250" key="1"/>
<evidence type="ECO:0000250" key="2">
    <source>
        <dbReference type="UniProtKB" id="P23804"/>
    </source>
</evidence>
<evidence type="ECO:0000250" key="3">
    <source>
        <dbReference type="UniProtKB" id="Q00987"/>
    </source>
</evidence>
<evidence type="ECO:0000255" key="4"/>
<evidence type="ECO:0000255" key="5">
    <source>
        <dbReference type="PROSITE-ProRule" id="PRU00175"/>
    </source>
</evidence>
<evidence type="ECO:0000255" key="6">
    <source>
        <dbReference type="PROSITE-ProRule" id="PRU00322"/>
    </source>
</evidence>
<evidence type="ECO:0000255" key="7">
    <source>
        <dbReference type="PROSITE-ProRule" id="PRU01273"/>
    </source>
</evidence>
<evidence type="ECO:0000256" key="8">
    <source>
        <dbReference type="SAM" id="MobiDB-lite"/>
    </source>
</evidence>
<evidence type="ECO:0000305" key="9"/>
<evidence type="ECO:0007829" key="10">
    <source>
        <dbReference type="PDB" id="6SQS"/>
    </source>
</evidence>